<comment type="function">
    <text evidence="6">Major toxin that belongs to the bicyclic heptapeptides called phallotoxins (PubMed:18025465). Although structurally related to amatoxins, phallotoxins have a different mode of action, which is the stabilization of F-actin (PubMed:18025465). Phallotoxins are poisonous when administered parenterally, but not orally because of poor absorption (PubMed:18025465).</text>
</comment>
<comment type="PTM">
    <text evidence="1">Processed by the macrocyclase-peptidase enzyme POPB to yield a toxic cyclic heptapeptide (By similarity). POPB first removes 10 residues from the N-terminus (By similarity). Conformational trapping of the remaining peptide forces the enzyme to release this intermediate rather than proceed to macrocyclization (By similarity). The enzyme rebinds the remaining peptide in a different conformation and catalyzes macrocyclization of the N-terminal 7 residues (By similarity).</text>
</comment>
<comment type="similarity">
    <text evidence="5">Belongs to the MSDIN fungal toxin family.</text>
</comment>
<reference key="1">
    <citation type="journal article" date="2007" name="Proc. Natl. Acad. Sci. U.S.A.">
        <title>Gene family encoding the major toxins of lethal Amanita mushrooms.</title>
        <authorList>
            <person name="Hallen H.E."/>
            <person name="Luo H."/>
            <person name="Scott-Craig J.S."/>
            <person name="Walton J.D."/>
        </authorList>
    </citation>
    <scope>NUCLEOTIDE SEQUENCE [GENOMIC DNA]</scope>
    <scope>FUNCTION</scope>
</reference>
<proteinExistence type="inferred from homology"/>
<dbReference type="EMBL" id="EU196158">
    <property type="protein sequence ID" value="ABW87787.1"/>
    <property type="molecule type" value="Genomic_DNA"/>
</dbReference>
<dbReference type="GO" id="GO:0090729">
    <property type="term" value="F:toxin activity"/>
    <property type="evidence" value="ECO:0007669"/>
    <property type="project" value="UniProtKB-KW"/>
</dbReference>
<dbReference type="InterPro" id="IPR027582">
    <property type="entry name" value="Amanitin/phalloidin"/>
</dbReference>
<dbReference type="NCBIfam" id="TIGR04309">
    <property type="entry name" value="amanitin"/>
    <property type="match status" value="1"/>
</dbReference>
<organism>
    <name type="scientific">Amanita ocreata</name>
    <name type="common">Western North American destroying angel</name>
    <dbReference type="NCBI Taxonomy" id="235532"/>
    <lineage>
        <taxon>Eukaryota</taxon>
        <taxon>Fungi</taxon>
        <taxon>Dikarya</taxon>
        <taxon>Basidiomycota</taxon>
        <taxon>Agaricomycotina</taxon>
        <taxon>Agaricomycetes</taxon>
        <taxon>Agaricomycetidae</taxon>
        <taxon>Agaricales</taxon>
        <taxon>Pluteineae</taxon>
        <taxon>Amanitaceae</taxon>
        <taxon>Amanita</taxon>
    </lineage>
</organism>
<protein>
    <recommendedName>
        <fullName evidence="4">Phalloidin proprotein</fullName>
    </recommendedName>
    <component>
        <recommendedName>
            <fullName evidence="4">Phalloidin</fullName>
        </recommendedName>
    </component>
</protein>
<feature type="propeptide" id="PRO_0000443632" evidence="2">
    <location>
        <begin position="1"/>
        <end position="10"/>
    </location>
</feature>
<feature type="peptide" id="PRO_0000443633" description="Phalloidin" evidence="2">
    <location>
        <begin position="11"/>
        <end position="17"/>
    </location>
</feature>
<feature type="propeptide" id="PRO_0000443634" evidence="2">
    <location>
        <begin position="18"/>
        <end position="31"/>
    </location>
</feature>
<feature type="cross-link" description="Cyclopeptide (Ala-Pro)" evidence="2">
    <location>
        <begin position="11"/>
        <end position="17"/>
    </location>
</feature>
<feature type="cross-link" description="2'-cysteinyl-6'-hydroxytryptophan sulfoxide (Trp-Cys)" evidence="3">
    <location>
        <begin position="12"/>
        <end position="16"/>
    </location>
</feature>
<feature type="non-terminal residue" evidence="5">
    <location>
        <position position="31"/>
    </location>
</feature>
<accession>A8W7P3</accession>
<gene>
    <name evidence="4" type="primary">PHD</name>
</gene>
<name>PHAT_AMAOC</name>
<keyword id="KW-0883">Thioether bond</keyword>
<keyword id="KW-0800">Toxin</keyword>
<sequence length="31" mass="3302">MSDINATRLPAWLATCPCAGDDVNPLLTRGE</sequence>
<evidence type="ECO:0000250" key="1">
    <source>
        <dbReference type="UniProtKB" id="A0A067SLB9"/>
    </source>
</evidence>
<evidence type="ECO:0000250" key="2">
    <source>
        <dbReference type="UniProtKB" id="A8W7M4"/>
    </source>
</evidence>
<evidence type="ECO:0000250" key="3">
    <source>
        <dbReference type="UniProtKB" id="P85421"/>
    </source>
</evidence>
<evidence type="ECO:0000303" key="4">
    <source>
    </source>
</evidence>
<evidence type="ECO:0000305" key="5"/>
<evidence type="ECO:0000305" key="6">
    <source>
    </source>
</evidence>